<dbReference type="EMBL" id="AP003288">
    <property type="protein sequence ID" value="BAB89838.1"/>
    <property type="molecule type" value="Genomic_DNA"/>
</dbReference>
<dbReference type="EMBL" id="AP003453">
    <property type="protein sequence ID" value="BAB68048.1"/>
    <property type="molecule type" value="Genomic_DNA"/>
</dbReference>
<dbReference type="EMBL" id="AP008207">
    <property type="protein sequence ID" value="BAF05990.1"/>
    <property type="molecule type" value="Genomic_DNA"/>
</dbReference>
<dbReference type="EMBL" id="AP014957">
    <property type="protein sequence ID" value="BAS74048.1"/>
    <property type="molecule type" value="Genomic_DNA"/>
</dbReference>
<dbReference type="EMBL" id="AK111476">
    <property type="protein sequence ID" value="BAG99271.1"/>
    <property type="molecule type" value="mRNA"/>
</dbReference>
<dbReference type="RefSeq" id="XP_015633568.1">
    <property type="nucleotide sequence ID" value="XM_015778082.1"/>
</dbReference>
<dbReference type="SMR" id="Q942F8"/>
<dbReference type="STRING" id="39947.Q942F8"/>
<dbReference type="PaxDb" id="39947-Q942F8"/>
<dbReference type="EnsemblPlants" id="Os01t0718000-01">
    <property type="protein sequence ID" value="Os01t0718000-01"/>
    <property type="gene ID" value="Os01g0718000"/>
</dbReference>
<dbReference type="Gramene" id="Os01t0718000-01">
    <property type="protein sequence ID" value="Os01t0718000-01"/>
    <property type="gene ID" value="Os01g0718000"/>
</dbReference>
<dbReference type="KEGG" id="dosa:Os01g0718000"/>
<dbReference type="eggNOG" id="KOG3173">
    <property type="taxonomic scope" value="Eukaryota"/>
</dbReference>
<dbReference type="HOGENOM" id="CLU_057016_5_3_1"/>
<dbReference type="InParanoid" id="Q942F8"/>
<dbReference type="OMA" id="LPCANDC"/>
<dbReference type="OrthoDB" id="428577at2759"/>
<dbReference type="Proteomes" id="UP000000763">
    <property type="component" value="Chromosome 1"/>
</dbReference>
<dbReference type="Proteomes" id="UP000059680">
    <property type="component" value="Chromosome 1"/>
</dbReference>
<dbReference type="GO" id="GO:0003677">
    <property type="term" value="F:DNA binding"/>
    <property type="evidence" value="ECO:0007669"/>
    <property type="project" value="InterPro"/>
</dbReference>
<dbReference type="GO" id="GO:0008270">
    <property type="term" value="F:zinc ion binding"/>
    <property type="evidence" value="ECO:0007669"/>
    <property type="project" value="UniProtKB-KW"/>
</dbReference>
<dbReference type="FunFam" id="4.10.1110.10:FF:000001">
    <property type="entry name" value="Zinc finger AN1-type containing 6"/>
    <property type="match status" value="1"/>
</dbReference>
<dbReference type="Gene3D" id="1.20.5.4770">
    <property type="match status" value="1"/>
</dbReference>
<dbReference type="Gene3D" id="4.10.1110.10">
    <property type="entry name" value="AN1-like Zinc finger"/>
    <property type="match status" value="1"/>
</dbReference>
<dbReference type="InterPro" id="IPR035896">
    <property type="entry name" value="AN1-like_Znf"/>
</dbReference>
<dbReference type="InterPro" id="IPR050652">
    <property type="entry name" value="AN1_A20_ZnFinger"/>
</dbReference>
<dbReference type="InterPro" id="IPR002653">
    <property type="entry name" value="Znf_A20"/>
</dbReference>
<dbReference type="InterPro" id="IPR000058">
    <property type="entry name" value="Znf_AN1"/>
</dbReference>
<dbReference type="PANTHER" id="PTHR10634">
    <property type="entry name" value="AN1-TYPE ZINC FINGER PROTEIN"/>
    <property type="match status" value="1"/>
</dbReference>
<dbReference type="PANTHER" id="PTHR10634:SF142">
    <property type="entry name" value="ZINC FINGER A20 AND AN1 DOMAIN-CONTAINING STRESS-ASSOCIATED PROTEIN 2"/>
    <property type="match status" value="1"/>
</dbReference>
<dbReference type="Pfam" id="PF01754">
    <property type="entry name" value="zf-A20"/>
    <property type="match status" value="1"/>
</dbReference>
<dbReference type="Pfam" id="PF01428">
    <property type="entry name" value="zf-AN1"/>
    <property type="match status" value="1"/>
</dbReference>
<dbReference type="SMART" id="SM00259">
    <property type="entry name" value="ZnF_A20"/>
    <property type="match status" value="1"/>
</dbReference>
<dbReference type="SMART" id="SM00154">
    <property type="entry name" value="ZnF_AN1"/>
    <property type="match status" value="1"/>
</dbReference>
<dbReference type="SUPFAM" id="SSF118310">
    <property type="entry name" value="AN1-like Zinc finger"/>
    <property type="match status" value="1"/>
</dbReference>
<dbReference type="SUPFAM" id="SSF57716">
    <property type="entry name" value="Glucocorticoid receptor-like (DNA-binding domain)"/>
    <property type="match status" value="1"/>
</dbReference>
<dbReference type="PROSITE" id="PS51036">
    <property type="entry name" value="ZF_A20"/>
    <property type="match status" value="1"/>
</dbReference>
<dbReference type="PROSITE" id="PS51039">
    <property type="entry name" value="ZF_AN1"/>
    <property type="match status" value="1"/>
</dbReference>
<keyword id="KW-0479">Metal-binding</keyword>
<keyword id="KW-1185">Reference proteome</keyword>
<keyword id="KW-0346">Stress response</keyword>
<keyword id="KW-0862">Zinc</keyword>
<keyword id="KW-0863">Zinc-finger</keyword>
<proteinExistence type="evidence at transcript level"/>
<sequence length="148" mass="15725">MEQGSERQDERPPLPCANGCGFFGSADTRGLCSKCYRQTVMSQASAPSAAAQSAEHDQVVLPAPEGVPVDEGAMPPPPPRHGAKTKSRCAACGRSVGLMGFECRCGAVFCGAHRYSDRHDCGYDYRGAGRDAIARANPVVRPDKVEKL</sequence>
<protein>
    <recommendedName>
        <fullName>Zinc finger A20 and AN1 domain-containing stress-associated protein 2</fullName>
        <shortName>OsSAP2</shortName>
    </recommendedName>
</protein>
<gene>
    <name type="primary">SAP2</name>
    <name type="ordered locus">Os01g0718000</name>
    <name type="ordered locus">LOC_Os01g52030</name>
    <name type="ORF">P0480C01.11</name>
    <name type="ORF">P0683B11.36</name>
</gene>
<accession>Q942F8</accession>
<accession>B7F3S4</accession>
<evidence type="ECO:0000250" key="1"/>
<evidence type="ECO:0000255" key="2">
    <source>
        <dbReference type="PROSITE-ProRule" id="PRU00449"/>
    </source>
</evidence>
<evidence type="ECO:0000255" key="3">
    <source>
        <dbReference type="PROSITE-ProRule" id="PRU00451"/>
    </source>
</evidence>
<evidence type="ECO:0000256" key="4">
    <source>
        <dbReference type="SAM" id="MobiDB-lite"/>
    </source>
</evidence>
<evidence type="ECO:0000269" key="5">
    <source>
    </source>
</evidence>
<reference key="1">
    <citation type="journal article" date="2002" name="Nature">
        <title>The genome sequence and structure of rice chromosome 1.</title>
        <authorList>
            <person name="Sasaki T."/>
            <person name="Matsumoto T."/>
            <person name="Yamamoto K."/>
            <person name="Sakata K."/>
            <person name="Baba T."/>
            <person name="Katayose Y."/>
            <person name="Wu J."/>
            <person name="Niimura Y."/>
            <person name="Cheng Z."/>
            <person name="Nagamura Y."/>
            <person name="Antonio B.A."/>
            <person name="Kanamori H."/>
            <person name="Hosokawa S."/>
            <person name="Masukawa M."/>
            <person name="Arikawa K."/>
            <person name="Chiden Y."/>
            <person name="Hayashi M."/>
            <person name="Okamoto M."/>
            <person name="Ando T."/>
            <person name="Aoki H."/>
            <person name="Arita K."/>
            <person name="Hamada M."/>
            <person name="Harada C."/>
            <person name="Hijishita S."/>
            <person name="Honda M."/>
            <person name="Ichikawa Y."/>
            <person name="Idonuma A."/>
            <person name="Iijima M."/>
            <person name="Ikeda M."/>
            <person name="Ikeno M."/>
            <person name="Ito S."/>
            <person name="Ito T."/>
            <person name="Ito Y."/>
            <person name="Ito Y."/>
            <person name="Iwabuchi A."/>
            <person name="Kamiya K."/>
            <person name="Karasawa W."/>
            <person name="Katagiri S."/>
            <person name="Kikuta A."/>
            <person name="Kobayashi N."/>
            <person name="Kono I."/>
            <person name="Machita K."/>
            <person name="Maehara T."/>
            <person name="Mizuno H."/>
            <person name="Mizubayashi T."/>
            <person name="Mukai Y."/>
            <person name="Nagasaki H."/>
            <person name="Nakashima M."/>
            <person name="Nakama Y."/>
            <person name="Nakamichi Y."/>
            <person name="Nakamura M."/>
            <person name="Namiki N."/>
            <person name="Negishi M."/>
            <person name="Ohta I."/>
            <person name="Ono N."/>
            <person name="Saji S."/>
            <person name="Sakai K."/>
            <person name="Shibata M."/>
            <person name="Shimokawa T."/>
            <person name="Shomura A."/>
            <person name="Song J."/>
            <person name="Takazaki Y."/>
            <person name="Terasawa K."/>
            <person name="Tsuji K."/>
            <person name="Waki K."/>
            <person name="Yamagata H."/>
            <person name="Yamane H."/>
            <person name="Yoshiki S."/>
            <person name="Yoshihara R."/>
            <person name="Yukawa K."/>
            <person name="Zhong H."/>
            <person name="Iwama H."/>
            <person name="Endo T."/>
            <person name="Ito H."/>
            <person name="Hahn J.H."/>
            <person name="Kim H.-I."/>
            <person name="Eun M.-Y."/>
            <person name="Yano M."/>
            <person name="Jiang J."/>
            <person name="Gojobori T."/>
        </authorList>
    </citation>
    <scope>NUCLEOTIDE SEQUENCE [LARGE SCALE GENOMIC DNA]</scope>
    <source>
        <strain>cv. Nipponbare</strain>
    </source>
</reference>
<reference key="2">
    <citation type="journal article" date="2005" name="Nature">
        <title>The map-based sequence of the rice genome.</title>
        <authorList>
            <consortium name="International rice genome sequencing project (IRGSP)"/>
        </authorList>
    </citation>
    <scope>NUCLEOTIDE SEQUENCE [LARGE SCALE GENOMIC DNA]</scope>
    <source>
        <strain>cv. Nipponbare</strain>
    </source>
</reference>
<reference key="3">
    <citation type="journal article" date="2008" name="Nucleic Acids Res.">
        <title>The rice annotation project database (RAP-DB): 2008 update.</title>
        <authorList>
            <consortium name="The rice annotation project (RAP)"/>
        </authorList>
    </citation>
    <scope>GENOME REANNOTATION</scope>
    <source>
        <strain>cv. Nipponbare</strain>
    </source>
</reference>
<reference key="4">
    <citation type="journal article" date="2013" name="Rice">
        <title>Improvement of the Oryza sativa Nipponbare reference genome using next generation sequence and optical map data.</title>
        <authorList>
            <person name="Kawahara Y."/>
            <person name="de la Bastide M."/>
            <person name="Hamilton J.P."/>
            <person name="Kanamori H."/>
            <person name="McCombie W.R."/>
            <person name="Ouyang S."/>
            <person name="Schwartz D.C."/>
            <person name="Tanaka T."/>
            <person name="Wu J."/>
            <person name="Zhou S."/>
            <person name="Childs K.L."/>
            <person name="Davidson R.M."/>
            <person name="Lin H."/>
            <person name="Quesada-Ocampo L."/>
            <person name="Vaillancourt B."/>
            <person name="Sakai H."/>
            <person name="Lee S.S."/>
            <person name="Kim J."/>
            <person name="Numa H."/>
            <person name="Itoh T."/>
            <person name="Buell C.R."/>
            <person name="Matsumoto T."/>
        </authorList>
    </citation>
    <scope>GENOME REANNOTATION</scope>
    <source>
        <strain>cv. Nipponbare</strain>
    </source>
</reference>
<reference key="5">
    <citation type="journal article" date="2003" name="Science">
        <title>Collection, mapping, and annotation of over 28,000 cDNA clones from japonica rice.</title>
        <authorList>
            <consortium name="The rice full-length cDNA consortium"/>
        </authorList>
    </citation>
    <scope>NUCLEOTIDE SEQUENCE [LARGE SCALE MRNA]</scope>
    <source>
        <strain>cv. Nipponbare</strain>
    </source>
</reference>
<reference key="6">
    <citation type="journal article" date="2006" name="Mol. Genet. Genomics">
        <title>Genome-wide analysis of the stress associated protein (SAP) gene family containing A20/AN1 zinc-finger(s) in rice and their phylogenetic relationship with Arabidopsis.</title>
        <authorList>
            <person name="Vij S."/>
            <person name="Tyagi A.K."/>
        </authorList>
    </citation>
    <scope>GENE FAMILY</scope>
    <scope>INDUCTION</scope>
</reference>
<comment type="function">
    <text evidence="1">May be involved in environmental stress response.</text>
</comment>
<comment type="induction">
    <text evidence="5">By dehydration and salt stress.</text>
</comment>
<organism>
    <name type="scientific">Oryza sativa subsp. japonica</name>
    <name type="common">Rice</name>
    <dbReference type="NCBI Taxonomy" id="39947"/>
    <lineage>
        <taxon>Eukaryota</taxon>
        <taxon>Viridiplantae</taxon>
        <taxon>Streptophyta</taxon>
        <taxon>Embryophyta</taxon>
        <taxon>Tracheophyta</taxon>
        <taxon>Spermatophyta</taxon>
        <taxon>Magnoliopsida</taxon>
        <taxon>Liliopsida</taxon>
        <taxon>Poales</taxon>
        <taxon>Poaceae</taxon>
        <taxon>BOP clade</taxon>
        <taxon>Oryzoideae</taxon>
        <taxon>Oryzeae</taxon>
        <taxon>Oryzinae</taxon>
        <taxon>Oryza</taxon>
        <taxon>Oryza sativa</taxon>
    </lineage>
</organism>
<feature type="chain" id="PRO_0000269865" description="Zinc finger A20 and AN1 domain-containing stress-associated protein 2">
    <location>
        <begin position="1"/>
        <end position="148"/>
    </location>
</feature>
<feature type="zinc finger region" description="A20-type" evidence="3">
    <location>
        <begin position="10"/>
        <end position="44"/>
    </location>
</feature>
<feature type="zinc finger region" description="AN1-type" evidence="2">
    <location>
        <begin position="83"/>
        <end position="129"/>
    </location>
</feature>
<feature type="region of interest" description="Disordered" evidence="4">
    <location>
        <begin position="64"/>
        <end position="86"/>
    </location>
</feature>
<feature type="binding site" evidence="3">
    <location>
        <position position="16"/>
    </location>
    <ligand>
        <name>Zn(2+)</name>
        <dbReference type="ChEBI" id="CHEBI:29105"/>
        <label>1</label>
    </ligand>
</feature>
<feature type="binding site" evidence="3">
    <location>
        <position position="20"/>
    </location>
    <ligand>
        <name>Zn(2+)</name>
        <dbReference type="ChEBI" id="CHEBI:29105"/>
        <label>1</label>
    </ligand>
</feature>
<feature type="binding site" evidence="3">
    <location>
        <position position="32"/>
    </location>
    <ligand>
        <name>Zn(2+)</name>
        <dbReference type="ChEBI" id="CHEBI:29105"/>
        <label>1</label>
    </ligand>
</feature>
<feature type="binding site" evidence="3">
    <location>
        <position position="35"/>
    </location>
    <ligand>
        <name>Zn(2+)</name>
        <dbReference type="ChEBI" id="CHEBI:29105"/>
        <label>1</label>
    </ligand>
</feature>
<feature type="binding site" evidence="2">
    <location>
        <position position="89"/>
    </location>
    <ligand>
        <name>Zn(2+)</name>
        <dbReference type="ChEBI" id="CHEBI:29105"/>
        <label>2</label>
    </ligand>
</feature>
<feature type="binding site" evidence="2">
    <location>
        <position position="92"/>
    </location>
    <ligand>
        <name>Zn(2+)</name>
        <dbReference type="ChEBI" id="CHEBI:29105"/>
        <label>2</label>
    </ligand>
</feature>
<feature type="binding site" evidence="2">
    <location>
        <position position="103"/>
    </location>
    <ligand>
        <name>Zn(2+)</name>
        <dbReference type="ChEBI" id="CHEBI:29105"/>
        <label>3</label>
    </ligand>
</feature>
<feature type="binding site" evidence="2">
    <location>
        <position position="105"/>
    </location>
    <ligand>
        <name>Zn(2+)</name>
        <dbReference type="ChEBI" id="CHEBI:29105"/>
        <label>3</label>
    </ligand>
</feature>
<feature type="binding site" evidence="2">
    <location>
        <position position="110"/>
    </location>
    <ligand>
        <name>Zn(2+)</name>
        <dbReference type="ChEBI" id="CHEBI:29105"/>
        <label>2</label>
    </ligand>
</feature>
<feature type="binding site" evidence="2">
    <location>
        <position position="113"/>
    </location>
    <ligand>
        <name>Zn(2+)</name>
        <dbReference type="ChEBI" id="CHEBI:29105"/>
        <label>2</label>
    </ligand>
</feature>
<feature type="binding site" evidence="2">
    <location>
        <position position="119"/>
    </location>
    <ligand>
        <name>Zn(2+)</name>
        <dbReference type="ChEBI" id="CHEBI:29105"/>
        <label>3</label>
    </ligand>
</feature>
<feature type="binding site" evidence="2">
    <location>
        <position position="121"/>
    </location>
    <ligand>
        <name>Zn(2+)</name>
        <dbReference type="ChEBI" id="CHEBI:29105"/>
        <label>3</label>
    </ligand>
</feature>
<name>SAP2_ORYSJ</name>